<organism>
    <name type="scientific">Papaya mosaic potexvirus</name>
    <name type="common">PMV</name>
    <dbReference type="NCBI Taxonomy" id="12181"/>
    <lineage>
        <taxon>Viruses</taxon>
        <taxon>Riboviria</taxon>
        <taxon>Orthornavirae</taxon>
        <taxon>Kitrinoviricota</taxon>
        <taxon>Alsuviricetes</taxon>
        <taxon>Tymovirales</taxon>
        <taxon>Alphaflexiviridae</taxon>
        <taxon>Potexvirus</taxon>
    </lineage>
</organism>
<evidence type="ECO:0000255" key="1"/>
<evidence type="ECO:0000255" key="2">
    <source>
        <dbReference type="PROSITE-ProRule" id="PRU00539"/>
    </source>
</evidence>
<evidence type="ECO:0000255" key="3">
    <source>
        <dbReference type="PROSITE-ProRule" id="PRU00805"/>
    </source>
</evidence>
<evidence type="ECO:0000255" key="4">
    <source>
        <dbReference type="PROSITE-ProRule" id="PRU01079"/>
    </source>
</evidence>
<evidence type="ECO:0000256" key="5">
    <source>
        <dbReference type="SAM" id="MobiDB-lite"/>
    </source>
</evidence>
<evidence type="ECO:0000305" key="6"/>
<name>RDRP_PMV</name>
<organismHost>
    <name type="scientific">Carica papaya</name>
    <name type="common">Papaya</name>
    <dbReference type="NCBI Taxonomy" id="3649"/>
</organismHost>
<organismHost>
    <name type="scientific">Ullucus tuberosus</name>
    <name type="common">Olluco</name>
    <dbReference type="NCBI Taxonomy" id="108055"/>
</organismHost>
<dbReference type="EC" id="2.7.7.48"/>
<dbReference type="EC" id="3.6.4.13"/>
<dbReference type="EMBL" id="D13957">
    <property type="protein sequence ID" value="BAA03050.1"/>
    <property type="molecule type" value="Genomic_RNA"/>
</dbReference>
<dbReference type="PIR" id="JQ0096">
    <property type="entry name" value="JQ0096"/>
</dbReference>
<dbReference type="RefSeq" id="NP_044330.1">
    <property type="nucleotide sequence ID" value="NC_001748.1"/>
</dbReference>
<dbReference type="GeneID" id="1494026"/>
<dbReference type="KEGG" id="vg:1494026"/>
<dbReference type="Proteomes" id="UP000000477">
    <property type="component" value="Genome"/>
</dbReference>
<dbReference type="GO" id="GO:0005524">
    <property type="term" value="F:ATP binding"/>
    <property type="evidence" value="ECO:0007669"/>
    <property type="project" value="UniProtKB-KW"/>
</dbReference>
<dbReference type="GO" id="GO:0016887">
    <property type="term" value="F:ATP hydrolysis activity"/>
    <property type="evidence" value="ECO:0007669"/>
    <property type="project" value="RHEA"/>
</dbReference>
<dbReference type="GO" id="GO:0008174">
    <property type="term" value="F:mRNA methyltransferase activity"/>
    <property type="evidence" value="ECO:0007669"/>
    <property type="project" value="InterPro"/>
</dbReference>
<dbReference type="GO" id="GO:0003723">
    <property type="term" value="F:RNA binding"/>
    <property type="evidence" value="ECO:0007669"/>
    <property type="project" value="InterPro"/>
</dbReference>
<dbReference type="GO" id="GO:0003724">
    <property type="term" value="F:RNA helicase activity"/>
    <property type="evidence" value="ECO:0007669"/>
    <property type="project" value="UniProtKB-EC"/>
</dbReference>
<dbReference type="GO" id="GO:0003968">
    <property type="term" value="F:RNA-directed RNA polymerase activity"/>
    <property type="evidence" value="ECO:0007669"/>
    <property type="project" value="UniProtKB-KW"/>
</dbReference>
<dbReference type="GO" id="GO:0006351">
    <property type="term" value="P:DNA-templated transcription"/>
    <property type="evidence" value="ECO:0007669"/>
    <property type="project" value="InterPro"/>
</dbReference>
<dbReference type="GO" id="GO:0016556">
    <property type="term" value="P:mRNA modification"/>
    <property type="evidence" value="ECO:0007669"/>
    <property type="project" value="InterPro"/>
</dbReference>
<dbReference type="GO" id="GO:0006396">
    <property type="term" value="P:RNA processing"/>
    <property type="evidence" value="ECO:0007669"/>
    <property type="project" value="InterPro"/>
</dbReference>
<dbReference type="GO" id="GO:0039694">
    <property type="term" value="P:viral RNA genome replication"/>
    <property type="evidence" value="ECO:0007669"/>
    <property type="project" value="InterPro"/>
</dbReference>
<dbReference type="CDD" id="cd23246">
    <property type="entry name" value="Alphaflexiviridae_RdRp"/>
    <property type="match status" value="1"/>
</dbReference>
<dbReference type="Gene3D" id="2.60.120.590">
    <property type="entry name" value="Alpha-ketoglutarate-dependent dioxygenase AlkB-like"/>
    <property type="match status" value="1"/>
</dbReference>
<dbReference type="Gene3D" id="3.40.50.300">
    <property type="entry name" value="P-loop containing nucleotide triphosphate hydrolases"/>
    <property type="match status" value="1"/>
</dbReference>
<dbReference type="InterPro" id="IPR027351">
    <property type="entry name" value="(+)RNA_virus_helicase_core_dom"/>
</dbReference>
<dbReference type="InterPro" id="IPR037151">
    <property type="entry name" value="AlkB-like_sf"/>
</dbReference>
<dbReference type="InterPro" id="IPR002588">
    <property type="entry name" value="Alphavirus-like_MT_dom"/>
</dbReference>
<dbReference type="InterPro" id="IPR043502">
    <property type="entry name" value="DNA/RNA_pol_sf"/>
</dbReference>
<dbReference type="InterPro" id="IPR044861">
    <property type="entry name" value="IPNS-like_FE2OG_OXY"/>
</dbReference>
<dbReference type="InterPro" id="IPR005123">
    <property type="entry name" value="Oxoglu/Fe-dep_dioxygenase_dom"/>
</dbReference>
<dbReference type="InterPro" id="IPR027417">
    <property type="entry name" value="P-loop_NTPase"/>
</dbReference>
<dbReference type="InterPro" id="IPR001788">
    <property type="entry name" value="RNA-dep_RNA_pol_alsuvir"/>
</dbReference>
<dbReference type="InterPro" id="IPR007094">
    <property type="entry name" value="RNA-dir_pol_PSvirus"/>
</dbReference>
<dbReference type="Pfam" id="PF03171">
    <property type="entry name" value="2OG-FeII_Oxy"/>
    <property type="match status" value="1"/>
</dbReference>
<dbReference type="Pfam" id="PF00978">
    <property type="entry name" value="RdRP_2"/>
    <property type="match status" value="1"/>
</dbReference>
<dbReference type="Pfam" id="PF01443">
    <property type="entry name" value="Viral_helicase1"/>
    <property type="match status" value="1"/>
</dbReference>
<dbReference type="Pfam" id="PF01660">
    <property type="entry name" value="Vmethyltransf"/>
    <property type="match status" value="1"/>
</dbReference>
<dbReference type="SUPFAM" id="SSF51197">
    <property type="entry name" value="Clavaminate synthase-like"/>
    <property type="match status" value="1"/>
</dbReference>
<dbReference type="SUPFAM" id="SSF56672">
    <property type="entry name" value="DNA/RNA polymerases"/>
    <property type="match status" value="1"/>
</dbReference>
<dbReference type="SUPFAM" id="SSF52540">
    <property type="entry name" value="P-loop containing nucleoside triphosphate hydrolases"/>
    <property type="match status" value="1"/>
</dbReference>
<dbReference type="PROSITE" id="PS51743">
    <property type="entry name" value="ALPHAVIRUS_MT"/>
    <property type="match status" value="1"/>
</dbReference>
<dbReference type="PROSITE" id="PS51471">
    <property type="entry name" value="FE2OG_OXY"/>
    <property type="match status" value="1"/>
</dbReference>
<dbReference type="PROSITE" id="PS51657">
    <property type="entry name" value="PSRV_HELICASE"/>
    <property type="match status" value="1"/>
</dbReference>
<dbReference type="PROSITE" id="PS50507">
    <property type="entry name" value="RDRP_SSRNA_POS"/>
    <property type="match status" value="1"/>
</dbReference>
<feature type="chain" id="PRO_0000222552" description="RNA replication protein">
    <location>
        <begin position="1"/>
        <end position="1547"/>
    </location>
</feature>
<feature type="domain" description="Alphavirus-like MT" evidence="4">
    <location>
        <begin position="59"/>
        <end position="227"/>
    </location>
</feature>
<feature type="domain" description="Fe2OG dioxygenase" evidence="3">
    <location>
        <begin position="599"/>
        <end position="690"/>
    </location>
</feature>
<feature type="domain" description="(+)RNA virus helicase ATP-binding">
    <location>
        <begin position="793"/>
        <end position="948"/>
    </location>
</feature>
<feature type="domain" description="(+)RNA virus helicase C-terminal">
    <location>
        <begin position="949"/>
        <end position="1082"/>
    </location>
</feature>
<feature type="domain" description="RdRp catalytic" evidence="2">
    <location>
        <begin position="1324"/>
        <end position="1431"/>
    </location>
</feature>
<feature type="region of interest" description="Disordered" evidence="5">
    <location>
        <begin position="477"/>
        <end position="523"/>
    </location>
</feature>
<feature type="compositionally biased region" description="Basic and acidic residues" evidence="5">
    <location>
        <begin position="477"/>
        <end position="495"/>
    </location>
</feature>
<feature type="compositionally biased region" description="Basic and acidic residues" evidence="5">
    <location>
        <begin position="503"/>
        <end position="522"/>
    </location>
</feature>
<feature type="binding site" evidence="1">
    <location>
        <begin position="822"/>
        <end position="829"/>
    </location>
    <ligand>
        <name>ATP</name>
        <dbReference type="ChEBI" id="CHEBI:30616"/>
    </ligand>
</feature>
<protein>
    <recommendedName>
        <fullName>RNA replication protein</fullName>
    </recommendedName>
    <alternativeName>
        <fullName>176 kDa protein</fullName>
    </alternativeName>
    <alternativeName>
        <fullName>ORF1 protein</fullName>
    </alternativeName>
    <domain>
        <recommendedName>
            <fullName>RNA-directed RNA polymerase</fullName>
            <ecNumber>2.7.7.48</ecNumber>
        </recommendedName>
    </domain>
    <domain>
        <recommendedName>
            <fullName>Helicase</fullName>
            <ecNumber>3.6.4.13</ecNumber>
        </recommendedName>
    </domain>
</protein>
<accession>P20951</accession>
<sequence>MANLRSVFEQLNDVSLRAVIQEEAYRDIKLTIKETKTYNPYAHPVAVADSLEKLGIETNPFAVKAHTHAAAKTIELDMYKIVSFYLPKENPTTFMFMKRSKLQYFRRGPQQKDVFLNAHIEPKDVARYDVDTLFDKNVTPQITTNTAFMGDTLHFLPLTAIERIFKSSPKLQTLYATMVLPPEALHRLHSLHPGIYELEFHQEHFIYKPGGHAGAAYIHKYEQLEWIKVGRFKWADEKGLTHMVTSQILETKGANHLFIFQRGRFLTPELRCFSTETKYVTMPPIFLPKQFNARLPIKKTTAQQLFLYVKSVKNVTERDIWAKMRQLLKTSELQDYNPREVTLLVNYFLLIARLRSETCFDNVLSGGMFKKLFKPFIAWWEIQKHKIFGNEEFEQLMEALEWVDVTLTYPTKTFDNRGWVVKLEARRGYEWFADEMHKPKGPELNLEEKKTDPDAASYEKYLKALSLLQKEPEVMEAKEAEATDEPQRPEVKEEQAEASTSGRAEEIQEDPATKKGKEEPNPNRDLLCPCGLHLKIKNAEFPELPVLDHPDHLTGRKAWFFSKDGKPYSYTGGSHASRGWPNWLEKILAAIEIKEPLPEFNQCLVQQFKLQAAIPFHRDDEPCYPKGHQVLTINHSGECLTQIACQKGKASITMGFGDYYLSPVGFQESHKHAVSNTTGGRVSLTFRCTVQQNKFNDDGSMEALDNLPWKAWIPKLQNLGFQGRQLQYDPNGALISPIEEIRSMPKCKPEGVPEVVYKTLDGLARAPTPYSPNPIRARAYTSDVKNCRIGALLRQQGKEWGCRFDALVEAGKRELAISVIHGAGGSGKSQALQTLIKDNPELDITVVLPTNELRLDWLRKLPKAPQEKFKTFEKALLAPPTPIVIFDDYGKLPAGYVEAFCLYFSTVQLIILTGDCKQSVHHESNENATTSSIEPLVKEASELCRYYINATHRNKKDLANKLGVYSEKTGLTEVTHGTTPIPGLHMLVPSLYKKQAFSEMGHKVSTYAGCQGITAPKIQILLTEETSLCSREVLYTALSRAVHSIHFVNASPNNQAFWKKLECTPYLKAFLSTLREEVAQPIEEKKAEPTPVEPPRTHIAKEDAMVEYENVIEKMPEKHEREIFSEKHGHSNCVQTEDPFIQMFSHQQAKDDTLLWATIEARLVISNPKANWQEYLEKRPVGEVLFESYKRAMHLPKMPIPFEEDLWNSSMHEVQKTYLSKPENMIKNGMARQSPDYDPNVISLFLKSQWVKKMEKLGAIKIKPGQTIASFHQATVMLFGTMARYMRRMREVFQPAHIRINCEMTPEDLSSWAAGEGGHWKFKGPSLANDFTAFDQSQDGAMLQFEILKARHHSIPEDILDAYLTIKTNSKIFLGTLAIMRLTGEGPTFDANTECNIAFTHTKFNIPEGTAQLYAGDDSAIDGLPALRPSFKMIEQKLTLRSKPQVALQQKGDWAEFCGFRITPKGLIKDPKKLHASWMLEKKKGNVKNVLRSYELDLALAYQHKDSLHELLSEEELKYHYETVRSIVKSGGGGVLNTYISKDESLY</sequence>
<reference key="1">
    <citation type="journal article" date="1989" name="J. Gen. Virol.">
        <title>Nucleotide sequence of papaya mosaic virus RNA.</title>
        <authorList>
            <person name="Sit T.L."/>
            <person name="Abouhaidar M.G."/>
            <person name="Holy S."/>
        </authorList>
    </citation>
    <scope>NUCLEOTIDE SEQUENCE [GENOMIC RNA]</scope>
</reference>
<comment type="function">
    <text evidence="6">RNA replication. The central part of this protein possibly functions as an ATP-binding helicase (Probable).</text>
</comment>
<comment type="catalytic activity">
    <reaction evidence="2">
        <text>RNA(n) + a ribonucleoside 5'-triphosphate = RNA(n+1) + diphosphate</text>
        <dbReference type="Rhea" id="RHEA:21248"/>
        <dbReference type="Rhea" id="RHEA-COMP:14527"/>
        <dbReference type="Rhea" id="RHEA-COMP:17342"/>
        <dbReference type="ChEBI" id="CHEBI:33019"/>
        <dbReference type="ChEBI" id="CHEBI:61557"/>
        <dbReference type="ChEBI" id="CHEBI:140395"/>
        <dbReference type="EC" id="2.7.7.48"/>
    </reaction>
</comment>
<comment type="catalytic activity">
    <reaction>
        <text>ATP + H2O = ADP + phosphate + H(+)</text>
        <dbReference type="Rhea" id="RHEA:13065"/>
        <dbReference type="ChEBI" id="CHEBI:15377"/>
        <dbReference type="ChEBI" id="CHEBI:15378"/>
        <dbReference type="ChEBI" id="CHEBI:30616"/>
        <dbReference type="ChEBI" id="CHEBI:43474"/>
        <dbReference type="ChEBI" id="CHEBI:456216"/>
        <dbReference type="EC" id="3.6.4.13"/>
    </reaction>
</comment>
<comment type="similarity">
    <text evidence="6">Belongs to the potexvirus/carlavirus RNA replication protein family.</text>
</comment>
<proteinExistence type="inferred from homology"/>
<keyword id="KW-0067">ATP-binding</keyword>
<keyword id="KW-0347">Helicase</keyword>
<keyword id="KW-0378">Hydrolase</keyword>
<keyword id="KW-0511">Multifunctional enzyme</keyword>
<keyword id="KW-0547">Nucleotide-binding</keyword>
<keyword id="KW-0548">Nucleotidyltransferase</keyword>
<keyword id="KW-1185">Reference proteome</keyword>
<keyword id="KW-0696">RNA-directed RNA polymerase</keyword>
<keyword id="KW-0808">Transferase</keyword>
<keyword id="KW-0693">Viral RNA replication</keyword>